<feature type="chain" id="PRO_1000128524" description="Small ribosomal subunit protein uS14">
    <location>
        <begin position="1"/>
        <end position="101"/>
    </location>
</feature>
<keyword id="KW-1185">Reference proteome</keyword>
<keyword id="KW-0687">Ribonucleoprotein</keyword>
<keyword id="KW-0689">Ribosomal protein</keyword>
<keyword id="KW-0694">RNA-binding</keyword>
<keyword id="KW-0699">rRNA-binding</keyword>
<accession>Q4FUE3</accession>
<proteinExistence type="inferred from homology"/>
<sequence length="101" mass="11754">MAKKSMINRELKREKMVAKYADKRIKLKETISDMTASDETRMEAMLELQALPRNASPVRLRNRCAITGRPHGYFRKFGLSRNMLRERVMQGDVPGVRKASW</sequence>
<protein>
    <recommendedName>
        <fullName evidence="1">Small ribosomal subunit protein uS14</fullName>
    </recommendedName>
    <alternativeName>
        <fullName evidence="2">30S ribosomal protein S14</fullName>
    </alternativeName>
</protein>
<organism>
    <name type="scientific">Psychrobacter arcticus (strain DSM 17307 / VKM B-2377 / 273-4)</name>
    <dbReference type="NCBI Taxonomy" id="259536"/>
    <lineage>
        <taxon>Bacteria</taxon>
        <taxon>Pseudomonadati</taxon>
        <taxon>Pseudomonadota</taxon>
        <taxon>Gammaproteobacteria</taxon>
        <taxon>Moraxellales</taxon>
        <taxon>Moraxellaceae</taxon>
        <taxon>Psychrobacter</taxon>
    </lineage>
</organism>
<comment type="function">
    <text evidence="1">Binds 16S rRNA, required for the assembly of 30S particles and may also be responsible for determining the conformation of the 16S rRNA at the A site.</text>
</comment>
<comment type="subunit">
    <text evidence="1">Part of the 30S ribosomal subunit. Contacts proteins S3 and S10.</text>
</comment>
<comment type="similarity">
    <text evidence="1">Belongs to the universal ribosomal protein uS14 family.</text>
</comment>
<dbReference type="EMBL" id="CP000082">
    <property type="protein sequence ID" value="AAZ18365.1"/>
    <property type="molecule type" value="Genomic_DNA"/>
</dbReference>
<dbReference type="RefSeq" id="WP_011279798.1">
    <property type="nucleotide sequence ID" value="NC_007204.1"/>
</dbReference>
<dbReference type="SMR" id="Q4FUE3"/>
<dbReference type="STRING" id="259536.Psyc_0502"/>
<dbReference type="KEGG" id="par:Psyc_0502"/>
<dbReference type="eggNOG" id="COG0199">
    <property type="taxonomic scope" value="Bacteria"/>
</dbReference>
<dbReference type="HOGENOM" id="CLU_139869_0_1_6"/>
<dbReference type="OrthoDB" id="9810484at2"/>
<dbReference type="Proteomes" id="UP000000546">
    <property type="component" value="Chromosome"/>
</dbReference>
<dbReference type="GO" id="GO:0005737">
    <property type="term" value="C:cytoplasm"/>
    <property type="evidence" value="ECO:0007669"/>
    <property type="project" value="UniProtKB-ARBA"/>
</dbReference>
<dbReference type="GO" id="GO:0015935">
    <property type="term" value="C:small ribosomal subunit"/>
    <property type="evidence" value="ECO:0007669"/>
    <property type="project" value="TreeGrafter"/>
</dbReference>
<dbReference type="GO" id="GO:0019843">
    <property type="term" value="F:rRNA binding"/>
    <property type="evidence" value="ECO:0007669"/>
    <property type="project" value="UniProtKB-UniRule"/>
</dbReference>
<dbReference type="GO" id="GO:0003735">
    <property type="term" value="F:structural constituent of ribosome"/>
    <property type="evidence" value="ECO:0007669"/>
    <property type="project" value="InterPro"/>
</dbReference>
<dbReference type="GO" id="GO:0006412">
    <property type="term" value="P:translation"/>
    <property type="evidence" value="ECO:0007669"/>
    <property type="project" value="UniProtKB-UniRule"/>
</dbReference>
<dbReference type="FunFam" id="1.10.287.1480:FF:000001">
    <property type="entry name" value="30S ribosomal protein S14"/>
    <property type="match status" value="1"/>
</dbReference>
<dbReference type="Gene3D" id="1.10.287.1480">
    <property type="match status" value="1"/>
</dbReference>
<dbReference type="HAMAP" id="MF_00537">
    <property type="entry name" value="Ribosomal_uS14_1"/>
    <property type="match status" value="1"/>
</dbReference>
<dbReference type="InterPro" id="IPR001209">
    <property type="entry name" value="Ribosomal_uS14"/>
</dbReference>
<dbReference type="InterPro" id="IPR023036">
    <property type="entry name" value="Ribosomal_uS14_bac/plastid"/>
</dbReference>
<dbReference type="InterPro" id="IPR018271">
    <property type="entry name" value="Ribosomal_uS14_CS"/>
</dbReference>
<dbReference type="NCBIfam" id="NF006477">
    <property type="entry name" value="PRK08881.1"/>
    <property type="match status" value="1"/>
</dbReference>
<dbReference type="PANTHER" id="PTHR19836">
    <property type="entry name" value="30S RIBOSOMAL PROTEIN S14"/>
    <property type="match status" value="1"/>
</dbReference>
<dbReference type="PANTHER" id="PTHR19836:SF19">
    <property type="entry name" value="SMALL RIBOSOMAL SUBUNIT PROTEIN US14M"/>
    <property type="match status" value="1"/>
</dbReference>
<dbReference type="Pfam" id="PF00253">
    <property type="entry name" value="Ribosomal_S14"/>
    <property type="match status" value="1"/>
</dbReference>
<dbReference type="SUPFAM" id="SSF57716">
    <property type="entry name" value="Glucocorticoid receptor-like (DNA-binding domain)"/>
    <property type="match status" value="1"/>
</dbReference>
<dbReference type="PROSITE" id="PS00527">
    <property type="entry name" value="RIBOSOMAL_S14"/>
    <property type="match status" value="1"/>
</dbReference>
<gene>
    <name evidence="1" type="primary">rpsN</name>
    <name type="ordered locus">Psyc_0502</name>
</gene>
<evidence type="ECO:0000255" key="1">
    <source>
        <dbReference type="HAMAP-Rule" id="MF_00537"/>
    </source>
</evidence>
<evidence type="ECO:0000305" key="2"/>
<name>RS14_PSYA2</name>
<reference key="1">
    <citation type="journal article" date="2010" name="Appl. Environ. Microbiol.">
        <title>The genome sequence of Psychrobacter arcticus 273-4, a psychroactive Siberian permafrost bacterium, reveals mechanisms for adaptation to low-temperature growth.</title>
        <authorList>
            <person name="Ayala-del-Rio H.L."/>
            <person name="Chain P.S."/>
            <person name="Grzymski J.J."/>
            <person name="Ponder M.A."/>
            <person name="Ivanova N."/>
            <person name="Bergholz P.W."/>
            <person name="Di Bartolo G."/>
            <person name="Hauser L."/>
            <person name="Land M."/>
            <person name="Bakermans C."/>
            <person name="Rodrigues D."/>
            <person name="Klappenbach J."/>
            <person name="Zarka D."/>
            <person name="Larimer F."/>
            <person name="Richardson P."/>
            <person name="Murray A."/>
            <person name="Thomashow M."/>
            <person name="Tiedje J.M."/>
        </authorList>
    </citation>
    <scope>NUCLEOTIDE SEQUENCE [LARGE SCALE GENOMIC DNA]</scope>
    <source>
        <strain>DSM 17307 / VKM B-2377 / 273-4</strain>
    </source>
</reference>